<organism>
    <name type="scientific">Caenorhabditis elegans</name>
    <dbReference type="NCBI Taxonomy" id="6239"/>
    <lineage>
        <taxon>Eukaryota</taxon>
        <taxon>Metazoa</taxon>
        <taxon>Ecdysozoa</taxon>
        <taxon>Nematoda</taxon>
        <taxon>Chromadorea</taxon>
        <taxon>Rhabditida</taxon>
        <taxon>Rhabditina</taxon>
        <taxon>Rhabditomorpha</taxon>
        <taxon>Rhabditoidea</taxon>
        <taxon>Rhabditidae</taxon>
        <taxon>Peloderinae</taxon>
        <taxon>Caenorhabditis</taxon>
    </lineage>
</organism>
<feature type="chain" id="PRO_0000065415" description="Chondroitin sulfate synthase mig-22">
    <location>
        <begin position="1"/>
        <end position="804"/>
    </location>
</feature>
<feature type="topological domain" description="Cytoplasmic" evidence="3">
    <location>
        <begin position="1"/>
        <end position="6"/>
    </location>
</feature>
<feature type="transmembrane region" description="Helical; Signal-anchor for type II membrane protein" evidence="3">
    <location>
        <begin position="7"/>
        <end position="27"/>
    </location>
</feature>
<feature type="topological domain" description="Lumenal" evidence="3">
    <location>
        <begin position="28"/>
        <end position="804"/>
    </location>
</feature>
<feature type="glycosylation site" description="N-linked (GlcNAc...) asparagine" evidence="3">
    <location>
        <position position="123"/>
    </location>
</feature>
<feature type="glycosylation site" description="N-linked (GlcNAc...) asparagine" evidence="3">
    <location>
        <position position="172"/>
    </location>
</feature>
<feature type="glycosylation site" description="N-linked (GlcNAc...) asparagine" evidence="3">
    <location>
        <position position="268"/>
    </location>
</feature>
<feature type="splice variant" id="VSP_019778" description="In isoform b." evidence="7">
    <location>
        <begin position="1"/>
        <end position="198"/>
    </location>
</feature>
<evidence type="ECO:0000250" key="1"/>
<evidence type="ECO:0000250" key="2">
    <source>
        <dbReference type="UniProtKB" id="Q8IZ52"/>
    </source>
</evidence>
<evidence type="ECO:0000255" key="3"/>
<evidence type="ECO:0000269" key="4">
    <source>
    </source>
</evidence>
<evidence type="ECO:0000269" key="5">
    <source>
    </source>
</evidence>
<evidence type="ECO:0000269" key="6">
    <source>
    </source>
</evidence>
<evidence type="ECO:0000303" key="7">
    <source>
    </source>
</evidence>
<evidence type="ECO:0000303" key="8">
    <source>
    </source>
</evidence>
<evidence type="ECO:0000305" key="9"/>
<proteinExistence type="evidence at protein level"/>
<dbReference type="EC" id="2.4.1.175"/>
<dbReference type="EC" id="2.4.1.226"/>
<dbReference type="EMBL" id="AB110823">
    <property type="protein sequence ID" value="BAD80738.1"/>
    <property type="molecule type" value="mRNA"/>
</dbReference>
<dbReference type="EMBL" id="AB110824">
    <property type="protein sequence ID" value="BAD80739.1"/>
    <property type="molecule type" value="mRNA"/>
</dbReference>
<dbReference type="EMBL" id="FO081577">
    <property type="protein sequence ID" value="CCD72535.1"/>
    <property type="molecule type" value="Genomic_DNA"/>
</dbReference>
<dbReference type="EMBL" id="FO081577">
    <property type="protein sequence ID" value="CCD72536.1"/>
    <property type="molecule type" value="Genomic_DNA"/>
</dbReference>
<dbReference type="PIR" id="S44860">
    <property type="entry name" value="S44860"/>
</dbReference>
<dbReference type="RefSeq" id="NP_001360092.1">
    <molecule id="P45895-2"/>
    <property type="nucleotide sequence ID" value="NM_001372637.3"/>
</dbReference>
<dbReference type="RefSeq" id="NP_498934.1">
    <molecule id="P45895-1"/>
    <property type="nucleotide sequence ID" value="NM_066533.7"/>
</dbReference>
<dbReference type="RefSeq" id="NP_871671.1">
    <property type="nucleotide sequence ID" value="NM_181942.3"/>
</dbReference>
<dbReference type="BioGRID" id="41434">
    <property type="interactions" value="2"/>
</dbReference>
<dbReference type="FunCoup" id="P45895">
    <property type="interactions" value="1935"/>
</dbReference>
<dbReference type="IntAct" id="P45895">
    <property type="interactions" value="1"/>
</dbReference>
<dbReference type="STRING" id="6239.PAR2.4a.3"/>
<dbReference type="CAZy" id="GT31">
    <property type="family name" value="Glycosyltransferase Family 31"/>
</dbReference>
<dbReference type="CAZy" id="GT7">
    <property type="family name" value="Glycosyltransferase Family 7"/>
</dbReference>
<dbReference type="GlyCosmos" id="P45895">
    <property type="glycosylation" value="3 sites, No reported glycans"/>
</dbReference>
<dbReference type="PaxDb" id="6239-PAR2.4a.2"/>
<dbReference type="PeptideAtlas" id="P45895"/>
<dbReference type="EnsemblMetazoa" id="PAR2.4a.1">
    <molecule id="P45895-1"/>
    <property type="protein sequence ID" value="PAR2.4a.1"/>
    <property type="gene ID" value="WBGene00003253"/>
</dbReference>
<dbReference type="EnsemblMetazoa" id="PAR2.4a.2">
    <molecule id="P45895-1"/>
    <property type="protein sequence ID" value="PAR2.4a.2"/>
    <property type="gene ID" value="WBGene00003253"/>
</dbReference>
<dbReference type="EnsemblMetazoa" id="PAR2.4a.3">
    <molecule id="P45895-1"/>
    <property type="protein sequence ID" value="PAR2.4a.3"/>
    <property type="gene ID" value="WBGene00003253"/>
</dbReference>
<dbReference type="EnsemblMetazoa" id="PAR2.4b.1">
    <molecule id="P45895-2"/>
    <property type="protein sequence ID" value="PAR2.4b.1"/>
    <property type="gene ID" value="WBGene00003253"/>
</dbReference>
<dbReference type="EnsemblMetazoa" id="PAR2.4b.2">
    <molecule id="P45895-2"/>
    <property type="protein sequence ID" value="PAR2.4b.2"/>
    <property type="gene ID" value="WBGene00003253"/>
</dbReference>
<dbReference type="EnsemblMetazoa" id="PAR2.4b.3">
    <molecule id="P45895-2"/>
    <property type="protein sequence ID" value="PAR2.4b.3"/>
    <property type="gene ID" value="WBGene00003253"/>
</dbReference>
<dbReference type="EnsemblMetazoa" id="PAR2.4b.4">
    <molecule id="P45895-2"/>
    <property type="protein sequence ID" value="PAR2.4b.4"/>
    <property type="gene ID" value="WBGene00003253"/>
</dbReference>
<dbReference type="GeneID" id="176231"/>
<dbReference type="KEGG" id="cel:CELE_PAR2.4"/>
<dbReference type="AGR" id="WB:WBGene00003253"/>
<dbReference type="CTD" id="176231"/>
<dbReference type="WormBase" id="PAR2.4a">
    <molecule id="P45895-1"/>
    <property type="protein sequence ID" value="CE00848"/>
    <property type="gene ID" value="WBGene00003253"/>
    <property type="gene designation" value="mig-22"/>
</dbReference>
<dbReference type="WormBase" id="PAR2.4b">
    <molecule id="P45895-2"/>
    <property type="protein sequence ID" value="CE32699"/>
    <property type="gene ID" value="WBGene00003253"/>
    <property type="gene designation" value="mig-22"/>
</dbReference>
<dbReference type="eggNOG" id="KOG3708">
    <property type="taxonomic scope" value="Eukaryota"/>
</dbReference>
<dbReference type="GeneTree" id="ENSGT01050000244857"/>
<dbReference type="InParanoid" id="P45895"/>
<dbReference type="OMA" id="YLNRVRM"/>
<dbReference type="OrthoDB" id="9985088at2759"/>
<dbReference type="PhylomeDB" id="P45895"/>
<dbReference type="PRO" id="PR:P45895"/>
<dbReference type="Proteomes" id="UP000001940">
    <property type="component" value="Chromosome III"/>
</dbReference>
<dbReference type="Bgee" id="WBGene00003253">
    <property type="expression patterns" value="Expressed in germ line (C elegans) and 4 other cell types or tissues"/>
</dbReference>
<dbReference type="GO" id="GO:0032580">
    <property type="term" value="C:Golgi cisterna membrane"/>
    <property type="evidence" value="ECO:0007669"/>
    <property type="project" value="UniProtKB-SubCell"/>
</dbReference>
<dbReference type="GO" id="GO:0019899">
    <property type="term" value="F:enzyme binding"/>
    <property type="evidence" value="ECO:0000353"/>
    <property type="project" value="WormBase"/>
</dbReference>
<dbReference type="GO" id="GO:0047238">
    <property type="term" value="F:glucuronosyl-N-acetylgalactosaminyl-proteoglycan 4-beta-N-acetylgalactosaminyltransferase activity"/>
    <property type="evidence" value="ECO:0000318"/>
    <property type="project" value="GO_Central"/>
</dbReference>
<dbReference type="GO" id="GO:0050510">
    <property type="term" value="F:N-acetylgalactosaminyl-proteoglycan 3-beta-glucuronosyltransferase activity"/>
    <property type="evidence" value="ECO:0007669"/>
    <property type="project" value="UniProtKB-EC"/>
</dbReference>
<dbReference type="FunFam" id="3.90.550.50:FF:000145">
    <property type="entry name" value="Chondroitin sulfate synthase mig-22"/>
    <property type="match status" value="1"/>
</dbReference>
<dbReference type="Gene3D" id="3.90.550.50">
    <property type="match status" value="1"/>
</dbReference>
<dbReference type="InterPro" id="IPR008428">
    <property type="entry name" value="Chond_GalNAc"/>
</dbReference>
<dbReference type="InterPro" id="IPR051227">
    <property type="entry name" value="CS_glycosyltransferase"/>
</dbReference>
<dbReference type="PANTHER" id="PTHR12369">
    <property type="entry name" value="CHONDROITIN SYNTHASE"/>
    <property type="match status" value="1"/>
</dbReference>
<dbReference type="PANTHER" id="PTHR12369:SF13">
    <property type="entry name" value="HEXOSYLTRANSFERASE"/>
    <property type="match status" value="1"/>
</dbReference>
<dbReference type="Pfam" id="PF05679">
    <property type="entry name" value="CHGN"/>
    <property type="match status" value="1"/>
</dbReference>
<protein>
    <recommendedName>
        <fullName>Chondroitin sulfate synthase mig-22</fullName>
        <ecNumber>2.4.1.175</ecNumber>
    </recommendedName>
    <alternativeName>
        <fullName>Abnormal cell migration</fullName>
    </alternativeName>
    <alternativeName>
        <fullName evidence="7">Chondroitin-polymerizing factor</fullName>
        <shortName evidence="7">ChPF</shortName>
    </alternativeName>
    <alternativeName>
        <fullName>N-acetylgalactosaminyl-proteoglycan 3-beta-glucuronosyltransferase 1</fullName>
        <ecNumber>2.4.1.226</ecNumber>
    </alternativeName>
</protein>
<keyword id="KW-0025">Alternative splicing</keyword>
<keyword id="KW-0325">Glycoprotein</keyword>
<keyword id="KW-0333">Golgi apparatus</keyword>
<keyword id="KW-0472">Membrane</keyword>
<keyword id="KW-1185">Reference proteome</keyword>
<keyword id="KW-0735">Signal-anchor</keyword>
<keyword id="KW-0808">Transferase</keyword>
<keyword id="KW-0812">Transmembrane</keyword>
<keyword id="KW-1133">Transmembrane helix</keyword>
<sequence>MVGGGRTGIHLLLGFLIGAALALFFFSSTPSIDLTSSLAAFTSCQNQETETNVLEPSALEKGRVYKDLSEHWIVHQDDMPAPPHNQDATPKVTRTRFAATELGTRERVMAAVMAESALALSINATLGRHVPRVHLFADSSRIDNDLAQLTNLSPYKLNGQKTHSMVLGLLFNMTVHNNYDWFLLAKDSTYINPFVLLRMIDTMNWNEPVVMGEAAEDGSGRCRLDTGMLLSQPAMHALMNNRNACNNFALAADDDQLAFEKCIQIATNLTCKPLHQGVRYEVWRGAERADSPAAHDSIEDWKHSPAFKRALAVPRLLSDADASALHDYFVRVEMQRADREIIKMEAELSRLAEQEARETGEAISWPPALPPYAKPPNRYQVSTWEYFTMTELFRSEPNQNVRRLEGKDFDDVAEVVVAARQQVESEEPELEFVQLRNGYRVFDPRRGMDYMVDLTYRKTVNEMPEVDNRFESDNEAAHEESLKEIVVERRVHVSRMIASTQLMNQAPYVKEDTDVTVVIPVASEKDVLPARKLLARQARLCLFPTEEARKTRMVVAVFPLIESRSVTAITNDMEELKRRCKRSLLETDVLPVHPAVSTEGKGTAAAAALDDAVDRYGANTIYLLLSPHADVQKEFFDRARINTIKHYQVFFPVPFVEYHPTISGMEMTEKEEKETPTEQAREAALSRLRDGVEPKRKRTLIVQKEHGRFDSQDFSCFAVYGVDYVTARAKFGQNERRNDLISAFLGQDSIHVLRAVEPTLRIRYHKRSCDMESIDTEDIARCLDSKKENVAAKDQLAKLLFHEK</sequence>
<name>CHSSB_CAEEL</name>
<comment type="function">
    <text evidence="2 4 5 8">Has both beta-1,3-glucuronic acid and beta-1,4-N-acetylgalactosamine transferase activity. Transfers glucuronic acid (GlcUA) from UDP-GlcUA and N-acetylgalactosamine (GalNAc) from UDP-GalNAc to the non-reducing end of the elongating chondroitin polymer (By similarity). Required together with sqv-5 for the biosynthesis of chondroitin (PubMed:15485872). Chondroitin is involved in organogenesis of the vulva, maturation of the gonad, and neural development (PubMed:15485872, PubMed:16982046). May have a specific role in unc-6/netrin-mediated dorsal guidance of gonadal distal tip cells (PubMed:16982046). Glycosyltransferase activity is weak (PubMed:15485872).</text>
</comment>
<comment type="catalytic activity">
    <reaction>
        <text>3-O-(beta-D-GlcA-(1-&gt;3)-beta-D-GalNAc-(1-&gt;4)-beta-D-GlcA-(1-&gt;3)-beta-D-Gal-(1-&gt;3)-beta-D-Gal-(1-&gt;4)-beta-D-Xyl)-L-seryl-[protein] + UDP-N-acetyl-alpha-D-galactosamine = 3-O-(beta-D-GalNAc-(1-&gt;4)-beta-D-GlcA-(1-&gt;3)-beta-D-GalNAc-(1-&gt;4)-beta-D-GlcA-(1-&gt;3)-beta-D-Gal-(1-&gt;3)-beta-D-Gal-(1-&gt;4)-beta-D-Xyl)-L-seryl-[protein] + UDP + H(+)</text>
        <dbReference type="Rhea" id="RHEA:20800"/>
        <dbReference type="Rhea" id="RHEA-COMP:14058"/>
        <dbReference type="Rhea" id="RHEA-COMP:14059"/>
        <dbReference type="ChEBI" id="CHEBI:15378"/>
        <dbReference type="ChEBI" id="CHEBI:58223"/>
        <dbReference type="ChEBI" id="CHEBI:67138"/>
        <dbReference type="ChEBI" id="CHEBI:138442"/>
        <dbReference type="ChEBI" id="CHEBI:138443"/>
        <dbReference type="EC" id="2.4.1.175"/>
    </reaction>
</comment>
<comment type="catalytic activity">
    <reaction>
        <text>3-O-{beta-D-GlcA-(1-&gt;3)-[beta-D-GalNAc-(1-&gt;4)-beta-D-GlcA-(1-&gt;3)](n)-beta-D-GalNAc-(1-&gt;4)-beta-D-GlcA-(1-&gt;3)-beta-D-Gal-(1-&gt;3)-beta-D-Gal-(1-&gt;4)-beta-D-Xyl}-L-seryl-[protein] + UDP-N-acetyl-alpha-D-galactosamine = 3-O-{[beta-D-GalNAc-(1-&gt;4)-beta-D-GlcA-(1-&gt;3)](n+1)-beta-D-GalNAc-(1-&gt;4)-beta-D-GlcA-(1-&gt;3)-beta-D-Gal-(1-&gt;3)-beta-D-Gal-(1-&gt;4)-beta-D-Xyl}-L-seryl-[protein] + UDP + H(+)</text>
        <dbReference type="Rhea" id="RHEA:55000"/>
        <dbReference type="Rhea" id="RHEA-COMP:14060"/>
        <dbReference type="Rhea" id="RHEA-COMP:14301"/>
        <dbReference type="ChEBI" id="CHEBI:15378"/>
        <dbReference type="ChEBI" id="CHEBI:58223"/>
        <dbReference type="ChEBI" id="CHEBI:67138"/>
        <dbReference type="ChEBI" id="CHEBI:138444"/>
        <dbReference type="ChEBI" id="CHEBI:138445"/>
        <dbReference type="EC" id="2.4.1.175"/>
    </reaction>
</comment>
<comment type="catalytic activity">
    <reaction>
        <text>3-O-(beta-D-GalNAc-(1-&gt;4)-beta-D-GlcA-(1-&gt;3)-beta-D-Gal-(1-&gt;3)-beta-D-Gal-(1-&gt;4)-beta-D-Xyl)-L-seryl-[protein] + UDP-alpha-D-glucuronate = 3-O-(beta-D-GlcA-(1-&gt;3)-beta-D-GalNAc-(1-&gt;4)-beta-D-GlcA-(1-&gt;3)-beta-D-Gal-(1-&gt;3)-beta-D-Gal-(1-&gt;4)-beta-D-Xyl)-L-seryl-[protein] + UDP + H(+)</text>
        <dbReference type="Rhea" id="RHEA:23428"/>
        <dbReference type="Rhea" id="RHEA-COMP:12575"/>
        <dbReference type="Rhea" id="RHEA-COMP:14058"/>
        <dbReference type="ChEBI" id="CHEBI:15378"/>
        <dbReference type="ChEBI" id="CHEBI:58052"/>
        <dbReference type="ChEBI" id="CHEBI:58223"/>
        <dbReference type="ChEBI" id="CHEBI:132105"/>
        <dbReference type="ChEBI" id="CHEBI:138442"/>
        <dbReference type="EC" id="2.4.1.226"/>
    </reaction>
</comment>
<comment type="catalytic activity">
    <reaction>
        <text>3-O-{[beta-D-GalNAc-(1-&gt;4)-beta-D-GlcA-(1-&gt;3)](n)-beta-D-GalNAc-(1-&gt;4)-beta-D-GlcA-(1-&gt;3)-beta-D-Gal-(1-&gt;3)-beta-D-Gal-(1-&gt;4)-beta-D-Xyl}-L-seryl-[protein] + UDP-alpha-D-glucuronate = 3-O-{beta-D-GlcA-(1-&gt;3)-[beta-D-GalNAc-(1-&gt;4)-beta-D-GlcA-(1-&gt;3)](n)-beta-D-GalNAc-(1-&gt;4)-beta-D-GlcA-(1-&gt;3)-beta-D-Gal-(1-&gt;3)-beta-D-Gal-(1-&gt;4)-beta-D-Xyl}-L-seryl-[protein] + UDP + H(+)</text>
        <dbReference type="Rhea" id="RHEA:54996"/>
        <dbReference type="Rhea" id="RHEA-COMP:14060"/>
        <dbReference type="Rhea" id="RHEA-COMP:14061"/>
        <dbReference type="ChEBI" id="CHEBI:15378"/>
        <dbReference type="ChEBI" id="CHEBI:58052"/>
        <dbReference type="ChEBI" id="CHEBI:58223"/>
        <dbReference type="ChEBI" id="CHEBI:138444"/>
        <dbReference type="ChEBI" id="CHEBI:138445"/>
        <dbReference type="EC" id="2.4.1.226"/>
    </reaction>
</comment>
<comment type="cofactor">
    <cofactor evidence="1">
        <name>a divalent metal cation</name>
        <dbReference type="ChEBI" id="CHEBI:60240"/>
    </cofactor>
</comment>
<comment type="subunit">
    <text evidence="6">Interacts with sqv-5.</text>
</comment>
<comment type="subcellular location">
    <subcellularLocation>
        <location evidence="5">Golgi apparatus</location>
        <location evidence="5">Golgi stack membrane</location>
        <topology evidence="9">Single-pass type II membrane protein</topology>
    </subcellularLocation>
</comment>
<comment type="alternative products">
    <event type="alternative splicing"/>
    <isoform>
        <id>P45895-1</id>
        <name>a</name>
        <sequence type="displayed"/>
    </isoform>
    <isoform>
        <id>P45895-2</id>
        <name>b</name>
        <sequence type="described" ref="VSP_019778"/>
    </isoform>
</comment>
<comment type="tissue specificity">
    <text evidence="4 5">Expressed in seam cells, the vulval epithelium and in oocytes (at protein level).</text>
</comment>
<comment type="developmental stage">
    <text evidence="5">Expressed in distal tip cells of the growing gonad arms from L3 to the young adult stage (at protein level).</text>
</comment>
<comment type="disruption phenotype">
    <text evidence="4 5">Viable but sterile, with reversion of cytokinesis during early embryogenesis.</text>
</comment>
<comment type="similarity">
    <text evidence="9">Belongs to the chondroitin N-acetylgalactosaminyltransferase family.</text>
</comment>
<accession>P45895</accession>
<accession>Q5NUN9</accession>
<accession>Q8IG00</accession>
<gene>
    <name type="primary">mig-22</name>
    <name type="synonym">pfc-1</name>
    <name type="ORF">PAR2.4</name>
</gene>
<reference key="1">
    <citation type="journal article" date="2004" name="J. Biol. Chem.">
        <title>Nematode chondroitin polymerizing factor showing cell-/organ-specific expression is indispensable for chondroitin synthesis and embryonic cell division.</title>
        <authorList>
            <person name="Izumikawa T."/>
            <person name="Kitagawa H."/>
            <person name="Mizuguchi S."/>
            <person name="Nomura K.H."/>
            <person name="Nomura K."/>
            <person name="Tamura J."/>
            <person name="Gengyo-Ando K."/>
            <person name="Mitani S."/>
            <person name="Sugahara K."/>
        </authorList>
    </citation>
    <scope>NUCLEOTIDE SEQUENCE [MRNA] (ISOFORMS A AND B)</scope>
    <scope>FUNCTION</scope>
    <scope>TISSUE SPECIFICITY</scope>
    <scope>DISRUPTION PHENOTYPE</scope>
</reference>
<reference key="2">
    <citation type="journal article" date="1994" name="Nature">
        <title>2.2 Mb of contiguous nucleotide sequence from chromosome III of C. elegans.</title>
        <authorList>
            <person name="Wilson R."/>
            <person name="Ainscough R."/>
            <person name="Anderson K."/>
            <person name="Baynes C."/>
            <person name="Berks M."/>
            <person name="Bonfield J."/>
            <person name="Burton J."/>
            <person name="Connell M."/>
            <person name="Copsey T."/>
            <person name="Cooper J."/>
            <person name="Coulson A."/>
            <person name="Craxton M."/>
            <person name="Dear S."/>
            <person name="Du Z."/>
            <person name="Durbin R."/>
            <person name="Favello A."/>
            <person name="Fraser A."/>
            <person name="Fulton L."/>
            <person name="Gardner A."/>
            <person name="Green P."/>
            <person name="Hawkins T."/>
            <person name="Hillier L."/>
            <person name="Jier M."/>
            <person name="Johnston L."/>
            <person name="Jones M."/>
            <person name="Kershaw J."/>
            <person name="Kirsten J."/>
            <person name="Laisster N."/>
            <person name="Latreille P."/>
            <person name="Lightning J."/>
            <person name="Lloyd C."/>
            <person name="Mortimore B."/>
            <person name="O'Callaghan M."/>
            <person name="Parsons J."/>
            <person name="Percy C."/>
            <person name="Rifken L."/>
            <person name="Roopra A."/>
            <person name="Saunders D."/>
            <person name="Shownkeen R."/>
            <person name="Sims M."/>
            <person name="Smaldon N."/>
            <person name="Smith A."/>
            <person name="Smith M."/>
            <person name="Sonnhammer E."/>
            <person name="Staden R."/>
            <person name="Sulston J."/>
            <person name="Thierry-Mieg J."/>
            <person name="Thomas K."/>
            <person name="Vaudin M."/>
            <person name="Vaughan K."/>
            <person name="Waterston R."/>
            <person name="Watson A."/>
            <person name="Weinstock L."/>
            <person name="Wilkinson-Sproat J."/>
            <person name="Wohldman P."/>
        </authorList>
    </citation>
    <scope>NUCLEOTIDE SEQUENCE [LARGE SCALE GENOMIC DNA]</scope>
    <source>
        <strain>Bristol N2</strain>
    </source>
</reference>
<reference key="3">
    <citation type="journal article" date="1998" name="Science">
        <title>Genome sequence of the nematode C. elegans: a platform for investigating biology.</title>
        <authorList>
            <consortium name="The C. elegans sequencing consortium"/>
        </authorList>
    </citation>
    <scope>NUCLEOTIDE SEQUENCE [LARGE SCALE GENOMIC DNA]</scope>
    <scope>ALTERNATIVE SPLICING</scope>
    <source>
        <strain>Bristol N2</strain>
    </source>
</reference>
<reference key="4">
    <citation type="journal article" date="2006" name="Dev. Biol.">
        <title>Chondroitin acts in the guidance of gonadal distal tip cells in C. elegans.</title>
        <authorList>
            <person name="Suzuki N."/>
            <person name="Toyoda H."/>
            <person name="Sano M."/>
            <person name="Nishiwaki K."/>
        </authorList>
    </citation>
    <scope>FUNCTION</scope>
    <scope>SUBCELLULAR LOCATION</scope>
    <scope>TISSUE SPECIFICITY</scope>
    <scope>DEVELOPMENTAL STAGE</scope>
    <scope>DISRUPTION PHENOTYPE</scope>
</reference>
<reference key="5">
    <citation type="journal article" date="2007" name="J. Biol. Chem.">
        <title>Expression of rib-1, a Caenorhabditis elegans homolog of the human tumor suppressor EXT genes, is indispensable for heparan sulfate synthesis and embryonic morphogenesis.</title>
        <authorList>
            <person name="Kitagawa H."/>
            <person name="Izumikawa T."/>
            <person name="Mizuguchi S."/>
            <person name="Dejima K."/>
            <person name="Nomura K.H."/>
            <person name="Egusa N."/>
            <person name="Taniguchi F."/>
            <person name="Tamura J."/>
            <person name="Gengyo-Ando K."/>
            <person name="Mitani S."/>
            <person name="Nomura K."/>
            <person name="Sugahara K."/>
        </authorList>
    </citation>
    <scope>INTERACTION WITH SQV-5</scope>
</reference>